<name>S39A7_MOUSE</name>
<feature type="chain" id="PRO_0000213689" description="Zinc transporter SLC39A7">
    <location>
        <begin position="1"/>
        <end position="476"/>
    </location>
</feature>
<feature type="transmembrane region" description="Helical" evidence="2">
    <location>
        <begin position="7"/>
        <end position="27"/>
    </location>
</feature>
<feature type="transmembrane region" description="Helical" evidence="2">
    <location>
        <begin position="146"/>
        <end position="166"/>
    </location>
</feature>
<feature type="transmembrane region" description="Helical" evidence="2">
    <location>
        <begin position="177"/>
        <end position="197"/>
    </location>
</feature>
<feature type="transmembrane region" description="Helical" evidence="2">
    <location>
        <begin position="222"/>
        <end position="242"/>
    </location>
</feature>
<feature type="transmembrane region" description="Helical" evidence="2">
    <location>
        <begin position="393"/>
        <end position="413"/>
    </location>
</feature>
<feature type="transmembrane region" description="Helical" evidence="2">
    <location>
        <begin position="417"/>
        <end position="437"/>
    </location>
</feature>
<feature type="region of interest" description="Disordered" evidence="3">
    <location>
        <begin position="35"/>
        <end position="131"/>
    </location>
</feature>
<feature type="region of interest" description="Disordered" evidence="3">
    <location>
        <begin position="249"/>
        <end position="320"/>
    </location>
</feature>
<feature type="compositionally biased region" description="Basic and acidic residues" evidence="3">
    <location>
        <begin position="35"/>
        <end position="109"/>
    </location>
</feature>
<feature type="compositionally biased region" description="Basic residues" evidence="3">
    <location>
        <begin position="110"/>
        <end position="120"/>
    </location>
</feature>
<feature type="compositionally biased region" description="Basic and acidic residues" evidence="3">
    <location>
        <begin position="257"/>
        <end position="292"/>
    </location>
</feature>
<feature type="modified residue" description="Pros-methylhistidine" evidence="10">
    <location>
        <position position="73"/>
    </location>
</feature>
<feature type="modified residue" description="Phosphoserine" evidence="1">
    <location>
        <position position="283"/>
    </location>
</feature>
<feature type="mutagenesis site" description="Abolished METTL9-mediated methylation." evidence="10">
    <original>H</original>
    <variation>A</variation>
    <location>
        <position position="73"/>
    </location>
</feature>
<feature type="mutagenesis site" description="Abolished METTL9-mediated methylation." evidence="10">
    <original>H</original>
    <variation>A</variation>
    <location>
        <position position="75"/>
    </location>
</feature>
<feature type="mutagenesis site" description="Homozygous mice have profound B cell immunodeficiency and impaired transition from late pre-B to immature B cell. B cells from mutant mice exhibit a diminished concentration of cytoplasmic free zinc and decreased phosphorylation of signaling molecules downstream of the pre-B cell and B cell receptors." evidence="8">
    <original>P</original>
    <variation>A</variation>
    <location>
        <position position="198"/>
    </location>
</feature>
<feature type="mutagenesis site" description="Decreased METTL9-mediated methylation; when associated with A-216." evidence="10">
    <original>H</original>
    <variation>A</variation>
    <location>
        <position position="204"/>
    </location>
</feature>
<feature type="mutagenesis site" description="Decreased METTL9-mediated methylation; when associated with A-204." evidence="10">
    <original>H</original>
    <variation>A</variation>
    <location>
        <position position="216"/>
    </location>
</feature>
<feature type="mutagenesis site" description="Decreased METTL9-mediated methylation; when associated with A-262." evidence="10">
    <original>H</original>
    <variation>A</variation>
    <location>
        <position position="254"/>
    </location>
</feature>
<feature type="mutagenesis site" description="Decreased METTL9-mediated methylation; when associated with A-254." evidence="10">
    <original>H</original>
    <variation>A</variation>
    <location>
        <position position="262"/>
    </location>
</feature>
<feature type="sequence conflict" description="In Ref. 3; BAE35522." evidence="12" ref="3">
    <original>A</original>
    <variation>T</variation>
    <location>
        <position position="208"/>
    </location>
</feature>
<feature type="sequence conflict" description="In Ref. 1; AAA37767." evidence="12" ref="1">
    <original>V</original>
    <variation>L</variation>
    <location>
        <position position="367"/>
    </location>
</feature>
<feature type="sequence conflict" description="In Ref. 1; AAA37767." evidence="12" ref="1">
    <original>EA</original>
    <variation>DR</variation>
    <location>
        <begin position="449"/>
        <end position="450"/>
    </location>
</feature>
<evidence type="ECO:0000250" key="1">
    <source>
        <dbReference type="UniProtKB" id="Q92504"/>
    </source>
</evidence>
<evidence type="ECO:0000255" key="2"/>
<evidence type="ECO:0000256" key="3">
    <source>
        <dbReference type="SAM" id="MobiDB-lite"/>
    </source>
</evidence>
<evidence type="ECO:0000269" key="4">
    <source>
    </source>
</evidence>
<evidence type="ECO:0000269" key="5">
    <source>
    </source>
</evidence>
<evidence type="ECO:0000269" key="6">
    <source>
    </source>
</evidence>
<evidence type="ECO:0000269" key="7">
    <source>
    </source>
</evidence>
<evidence type="ECO:0000269" key="8">
    <source>
    </source>
</evidence>
<evidence type="ECO:0000269" key="9">
    <source>
    </source>
</evidence>
<evidence type="ECO:0000269" key="10">
    <source>
    </source>
</evidence>
<evidence type="ECO:0000303" key="11">
    <source>
    </source>
</evidence>
<evidence type="ECO:0000305" key="12"/>
<keyword id="KW-0256">Endoplasmic reticulum</keyword>
<keyword id="KW-0333">Golgi apparatus</keyword>
<keyword id="KW-0406">Ion transport</keyword>
<keyword id="KW-0472">Membrane</keyword>
<keyword id="KW-0488">Methylation</keyword>
<keyword id="KW-0597">Phosphoprotein</keyword>
<keyword id="KW-1185">Reference proteome</keyword>
<keyword id="KW-0812">Transmembrane</keyword>
<keyword id="KW-1133">Transmembrane helix</keyword>
<keyword id="KW-0813">Transport</keyword>
<keyword id="KW-0862">Zinc</keyword>
<keyword id="KW-0864">Zinc transport</keyword>
<reference key="1">
    <citation type="journal article" date="1990" name="Mol. Cell. Biol.">
        <title>A putative transmembrane protein with histidine-rich charge clusters encoded in the H-2K/tw5 region of mice.</title>
        <authorList>
            <person name="St Jacques B."/>
            <person name="Han T.-H."/>
            <person name="Macmurray A."/>
            <person name="Shin H.-S."/>
        </authorList>
    </citation>
    <scope>NUCLEOTIDE SEQUENCE [MRNA]</scope>
    <scope>TISSUE SPECIFICITY</scope>
</reference>
<reference key="2">
    <citation type="submission" date="1998-10" db="EMBL/GenBank/DDBJ databases">
        <title>Sequence of the mouse major histocompatibility complex class II region.</title>
        <authorList>
            <person name="Rowen L."/>
            <person name="Qin S."/>
            <person name="Madan A."/>
            <person name="Loretz C."/>
            <person name="James R."/>
            <person name="Dors M."/>
            <person name="Mix L."/>
            <person name="Hall J."/>
            <person name="Lasky S."/>
            <person name="Hood L."/>
        </authorList>
    </citation>
    <scope>NUCLEOTIDE SEQUENCE [LARGE SCALE GENOMIC DNA]</scope>
    <source>
        <strain>129/SvJ</strain>
    </source>
</reference>
<reference key="3">
    <citation type="journal article" date="2005" name="Science">
        <title>The transcriptional landscape of the mammalian genome.</title>
        <authorList>
            <person name="Carninci P."/>
            <person name="Kasukawa T."/>
            <person name="Katayama S."/>
            <person name="Gough J."/>
            <person name="Frith M.C."/>
            <person name="Maeda N."/>
            <person name="Oyama R."/>
            <person name="Ravasi T."/>
            <person name="Lenhard B."/>
            <person name="Wells C."/>
            <person name="Kodzius R."/>
            <person name="Shimokawa K."/>
            <person name="Bajic V.B."/>
            <person name="Brenner S.E."/>
            <person name="Batalov S."/>
            <person name="Forrest A.R."/>
            <person name="Zavolan M."/>
            <person name="Davis M.J."/>
            <person name="Wilming L.G."/>
            <person name="Aidinis V."/>
            <person name="Allen J.E."/>
            <person name="Ambesi-Impiombato A."/>
            <person name="Apweiler R."/>
            <person name="Aturaliya R.N."/>
            <person name="Bailey T.L."/>
            <person name="Bansal M."/>
            <person name="Baxter L."/>
            <person name="Beisel K.W."/>
            <person name="Bersano T."/>
            <person name="Bono H."/>
            <person name="Chalk A.M."/>
            <person name="Chiu K.P."/>
            <person name="Choudhary V."/>
            <person name="Christoffels A."/>
            <person name="Clutterbuck D.R."/>
            <person name="Crowe M.L."/>
            <person name="Dalla E."/>
            <person name="Dalrymple B.P."/>
            <person name="de Bono B."/>
            <person name="Della Gatta G."/>
            <person name="di Bernardo D."/>
            <person name="Down T."/>
            <person name="Engstrom P."/>
            <person name="Fagiolini M."/>
            <person name="Faulkner G."/>
            <person name="Fletcher C.F."/>
            <person name="Fukushima T."/>
            <person name="Furuno M."/>
            <person name="Futaki S."/>
            <person name="Gariboldi M."/>
            <person name="Georgii-Hemming P."/>
            <person name="Gingeras T.R."/>
            <person name="Gojobori T."/>
            <person name="Green R.E."/>
            <person name="Gustincich S."/>
            <person name="Harbers M."/>
            <person name="Hayashi Y."/>
            <person name="Hensch T.K."/>
            <person name="Hirokawa N."/>
            <person name="Hill D."/>
            <person name="Huminiecki L."/>
            <person name="Iacono M."/>
            <person name="Ikeo K."/>
            <person name="Iwama A."/>
            <person name="Ishikawa T."/>
            <person name="Jakt M."/>
            <person name="Kanapin A."/>
            <person name="Katoh M."/>
            <person name="Kawasawa Y."/>
            <person name="Kelso J."/>
            <person name="Kitamura H."/>
            <person name="Kitano H."/>
            <person name="Kollias G."/>
            <person name="Krishnan S.P."/>
            <person name="Kruger A."/>
            <person name="Kummerfeld S.K."/>
            <person name="Kurochkin I.V."/>
            <person name="Lareau L.F."/>
            <person name="Lazarevic D."/>
            <person name="Lipovich L."/>
            <person name="Liu J."/>
            <person name="Liuni S."/>
            <person name="McWilliam S."/>
            <person name="Madan Babu M."/>
            <person name="Madera M."/>
            <person name="Marchionni L."/>
            <person name="Matsuda H."/>
            <person name="Matsuzawa S."/>
            <person name="Miki H."/>
            <person name="Mignone F."/>
            <person name="Miyake S."/>
            <person name="Morris K."/>
            <person name="Mottagui-Tabar S."/>
            <person name="Mulder N."/>
            <person name="Nakano N."/>
            <person name="Nakauchi H."/>
            <person name="Ng P."/>
            <person name="Nilsson R."/>
            <person name="Nishiguchi S."/>
            <person name="Nishikawa S."/>
            <person name="Nori F."/>
            <person name="Ohara O."/>
            <person name="Okazaki Y."/>
            <person name="Orlando V."/>
            <person name="Pang K.C."/>
            <person name="Pavan W.J."/>
            <person name="Pavesi G."/>
            <person name="Pesole G."/>
            <person name="Petrovsky N."/>
            <person name="Piazza S."/>
            <person name="Reed J."/>
            <person name="Reid J.F."/>
            <person name="Ring B.Z."/>
            <person name="Ringwald M."/>
            <person name="Rost B."/>
            <person name="Ruan Y."/>
            <person name="Salzberg S.L."/>
            <person name="Sandelin A."/>
            <person name="Schneider C."/>
            <person name="Schoenbach C."/>
            <person name="Sekiguchi K."/>
            <person name="Semple C.A."/>
            <person name="Seno S."/>
            <person name="Sessa L."/>
            <person name="Sheng Y."/>
            <person name="Shibata Y."/>
            <person name="Shimada H."/>
            <person name="Shimada K."/>
            <person name="Silva D."/>
            <person name="Sinclair B."/>
            <person name="Sperling S."/>
            <person name="Stupka E."/>
            <person name="Sugiura K."/>
            <person name="Sultana R."/>
            <person name="Takenaka Y."/>
            <person name="Taki K."/>
            <person name="Tammoja K."/>
            <person name="Tan S.L."/>
            <person name="Tang S."/>
            <person name="Taylor M.S."/>
            <person name="Tegner J."/>
            <person name="Teichmann S.A."/>
            <person name="Ueda H.R."/>
            <person name="van Nimwegen E."/>
            <person name="Verardo R."/>
            <person name="Wei C.L."/>
            <person name="Yagi K."/>
            <person name="Yamanishi H."/>
            <person name="Zabarovsky E."/>
            <person name="Zhu S."/>
            <person name="Zimmer A."/>
            <person name="Hide W."/>
            <person name="Bult C."/>
            <person name="Grimmond S.M."/>
            <person name="Teasdale R.D."/>
            <person name="Liu E.T."/>
            <person name="Brusic V."/>
            <person name="Quackenbush J."/>
            <person name="Wahlestedt C."/>
            <person name="Mattick J.S."/>
            <person name="Hume D.A."/>
            <person name="Kai C."/>
            <person name="Sasaki D."/>
            <person name="Tomaru Y."/>
            <person name="Fukuda S."/>
            <person name="Kanamori-Katayama M."/>
            <person name="Suzuki M."/>
            <person name="Aoki J."/>
            <person name="Arakawa T."/>
            <person name="Iida J."/>
            <person name="Imamura K."/>
            <person name="Itoh M."/>
            <person name="Kato T."/>
            <person name="Kawaji H."/>
            <person name="Kawagashira N."/>
            <person name="Kawashima T."/>
            <person name="Kojima M."/>
            <person name="Kondo S."/>
            <person name="Konno H."/>
            <person name="Nakano K."/>
            <person name="Ninomiya N."/>
            <person name="Nishio T."/>
            <person name="Okada M."/>
            <person name="Plessy C."/>
            <person name="Shibata K."/>
            <person name="Shiraki T."/>
            <person name="Suzuki S."/>
            <person name="Tagami M."/>
            <person name="Waki K."/>
            <person name="Watahiki A."/>
            <person name="Okamura-Oho Y."/>
            <person name="Suzuki H."/>
            <person name="Kawai J."/>
            <person name="Hayashizaki Y."/>
        </authorList>
    </citation>
    <scope>NUCLEOTIDE SEQUENCE [LARGE SCALE MRNA]</scope>
    <source>
        <strain>C57BL/6J</strain>
        <tissue>Osteoclast</tissue>
    </source>
</reference>
<reference key="4">
    <citation type="journal article" date="2005" name="J. Biol. Chem.">
        <title>The ZIP7 gene (Slc39a7) encodes a zinc transporter involved in zinc homeostasis of the Golgi apparatus.</title>
        <authorList>
            <person name="Huang L."/>
            <person name="Kirschke C.P."/>
            <person name="Zhang Y."/>
            <person name="Yu Y.Y."/>
        </authorList>
    </citation>
    <scope>FUNCTION</scope>
    <scope>TRANSPORTER ACTIVITY</scope>
    <scope>TISSUE SPECIFICITY</scope>
</reference>
<reference key="5">
    <citation type="journal article" date="2010" name="Cell">
        <title>A tissue-specific atlas of mouse protein phosphorylation and expression.</title>
        <authorList>
            <person name="Huttlin E.L."/>
            <person name="Jedrychowski M.P."/>
            <person name="Elias J.E."/>
            <person name="Goswami T."/>
            <person name="Rad R."/>
            <person name="Beausoleil S.A."/>
            <person name="Villen J."/>
            <person name="Haas W."/>
            <person name="Sowa M.E."/>
            <person name="Gygi S.P."/>
        </authorList>
    </citation>
    <scope>IDENTIFICATION BY MASS SPECTROMETRY [LARGE SCALE ANALYSIS]</scope>
    <source>
        <tissue>Lung</tissue>
        <tissue>Pancreas</tissue>
        <tissue>Spleen</tissue>
    </source>
</reference>
<reference key="6">
    <citation type="journal article" date="2016" name="PLoS Genet.">
        <title>Zinc Transporter SLC39A7/ZIP7 Promotes Intestinal Epithelial Self-Renewal by Resolving ER Stress.</title>
        <authorList>
            <person name="Ohashi W."/>
            <person name="Kimura S."/>
            <person name="Iwanaga T."/>
            <person name="Furusawa Y."/>
            <person name="Irie T."/>
            <person name="Izumi H."/>
            <person name="Watanabe T."/>
            <person name="Hijikata A."/>
            <person name="Hara T."/>
            <person name="Ohara O."/>
            <person name="Koseki H."/>
            <person name="Sato T."/>
            <person name="Robine S."/>
            <person name="Mori H."/>
            <person name="Hattori Y."/>
            <person name="Watarai H."/>
            <person name="Mishima K."/>
            <person name="Ohno H."/>
            <person name="Hase K."/>
            <person name="Fukada T."/>
        </authorList>
    </citation>
    <scope>TISSUE SPECIFICITY</scope>
    <scope>FUNCTION</scope>
</reference>
<reference key="7">
    <citation type="journal article" date="2017" name="J. Invest. Dermatol.">
        <title>Requirement of Zinc Transporter SLC39A7/ZIP7 for Dermal Development to Fine-Tune Endoplasmic Reticulum Function by Regulating Protein Disulfide Isomerase.</title>
        <authorList>
            <person name="Bin B.H."/>
            <person name="Bhin J."/>
            <person name="Seo J."/>
            <person name="Kim S.Y."/>
            <person name="Lee E."/>
            <person name="Park K."/>
            <person name="Choi D.H."/>
            <person name="Takagishi T."/>
            <person name="Hara T."/>
            <person name="Hwang D."/>
            <person name="Koseki H."/>
            <person name="Asada Y."/>
            <person name="Shimoda S."/>
            <person name="Mishima K."/>
            <person name="Fukada T."/>
        </authorList>
    </citation>
    <scope>FUNCTION</scope>
</reference>
<reference key="8">
    <citation type="journal article" date="2019" name="Cells">
        <title>The Zinc Transporter Zip7 Is Downregulated in Skeletal Muscle of Insulin-Resistant Cells and in Mice Fed a High-Fat Diet.</title>
        <authorList>
            <person name="Norouzi S."/>
            <person name="Adulcikas J."/>
            <person name="Henstridge D.C."/>
            <person name="Sonda S."/>
            <person name="Sohal S.S."/>
            <person name="Myers S."/>
        </authorList>
    </citation>
    <scope>FUNCTION</scope>
    <scope>INDUCTION</scope>
</reference>
<reference key="9">
    <citation type="journal article" date="2019" name="Nat. Immunol.">
        <title>An essential role for the Zn2+ transporter ZIP7 in B cell development.</title>
        <authorList>
            <person name="Anzilotti C."/>
            <person name="Swan D.J."/>
            <person name="Boisson B."/>
            <person name="Deobagkar-Lele M."/>
            <person name="Oliveira C."/>
            <person name="Chabosseau P."/>
            <person name="Engelhardt K.R."/>
            <person name="Xu X."/>
            <person name="Chen R."/>
            <person name="Alvarez L."/>
            <person name="Berlinguer-Palmini R."/>
            <person name="Bull K.R."/>
            <person name="Cawthorne E."/>
            <person name="Cribbs A.P."/>
            <person name="Crockford T.L."/>
            <person name="Dang T.S."/>
            <person name="Fearn A."/>
            <person name="Fenech E.J."/>
            <person name="de Jong S.J."/>
            <person name="Lagerholm B.C."/>
            <person name="Ma C.S."/>
            <person name="Sims D."/>
            <person name="van den Berg B."/>
            <person name="Xu Y."/>
            <person name="Cant A.J."/>
            <person name="Kleiner G."/>
            <person name="Leahy T.R."/>
            <person name="de la Morena M.T."/>
            <person name="Puck J.M."/>
            <person name="Shapiro R.S."/>
            <person name="van der Burg M."/>
            <person name="Chapman J.R."/>
            <person name="Christianson J.C."/>
            <person name="Davies B."/>
            <person name="McGrath J.A."/>
            <person name="Przyborski S."/>
            <person name="Santibanez Koref M."/>
            <person name="Tangye S.G."/>
            <person name="Werner A."/>
            <person name="Rutter G.A."/>
            <person name="Padilla-Parra S."/>
            <person name="Casanova J.L."/>
            <person name="Cornall R.J."/>
            <person name="Conley M.E."/>
            <person name="Hambleton S."/>
        </authorList>
    </citation>
    <scope>FUNCTION</scope>
    <scope>MUTAGENESIS OF PRO-198</scope>
</reference>
<reference key="10">
    <citation type="journal article" date="2021" name="Protein Cell">
        <title>METTL9 mediated N1-histidine methylation of zinc transporters is required for tumor growth.</title>
        <authorList>
            <person name="Lv M."/>
            <person name="Cao D."/>
            <person name="Zhang L."/>
            <person name="Hu C."/>
            <person name="Li S."/>
            <person name="Zhang P."/>
            <person name="Zhu L."/>
            <person name="Yi X."/>
            <person name="Li C."/>
            <person name="Yang A."/>
            <person name="Yang Z."/>
            <person name="Zhu Y."/>
            <person name="Zhang K."/>
            <person name="Pan W."/>
        </authorList>
    </citation>
    <scope>METHYLATION AT HIS-73</scope>
    <scope>MUTAGENESIS OF HIS-73; HIS-75; HIS-204; HIS-216; HIS-254 AND HIS-262</scope>
</reference>
<protein>
    <recommendedName>
        <fullName>Zinc transporter SLC39A7</fullName>
    </recommendedName>
    <alternativeName>
        <fullName>Histidine-rich membrane protein Ke4</fullName>
    </alternativeName>
    <alternativeName>
        <fullName>Solute carrier family 39 member 7</fullName>
    </alternativeName>
    <alternativeName>
        <fullName evidence="11">Zrt-, Irt-like protein 7</fullName>
        <shortName evidence="11">ZIP7</shortName>
    </alternativeName>
</protein>
<sequence>MTMGLRAPHWVAVGLLTWAALGLLVAGHEGHGDLHKDVEEDFHGHSHGHSHEDFHHGHSHGHSHEDFHHGHGHTHESIWHGHAHSHDHGHSREELHHGHSHGHSHDSLHHGGHGHAHREHSHGTSREAGAPGIKHHLDTVTLWAYALGATVLISAAPFFVLFLIPVESNSPRHRSLLQILLSFASGGLLGDAFLHLIPHALEPHSHHAPEQPGHGHSHSGQGPILSVGLWVLSGIVAFLVVEKFVRHVKGGHGHSHGHGDRHAHGDSHTHGDRHECSSKEKPSTEEEKEVGGLRKRRGGNTGPRDGPVKPQSPEEEKAGSDLRVSGYLNLAADLAHNFTDGLAIGASFRGGRGLGILTTMTVLLHEVPHEVGDFAILVQSGCSKKQAMRLQLVTAIGALAGTACALLTEGGAVDSDVAGGAGPGWVLPFTAGGFIYVATVSVLPELLREASPLQSLLEVLGLLGGVAMMVLIAHLE</sequence>
<organism>
    <name type="scientific">Mus musculus</name>
    <name type="common">Mouse</name>
    <dbReference type="NCBI Taxonomy" id="10090"/>
    <lineage>
        <taxon>Eukaryota</taxon>
        <taxon>Metazoa</taxon>
        <taxon>Chordata</taxon>
        <taxon>Craniata</taxon>
        <taxon>Vertebrata</taxon>
        <taxon>Euteleostomi</taxon>
        <taxon>Mammalia</taxon>
        <taxon>Eutheria</taxon>
        <taxon>Euarchontoglires</taxon>
        <taxon>Glires</taxon>
        <taxon>Rodentia</taxon>
        <taxon>Myomorpha</taxon>
        <taxon>Muroidea</taxon>
        <taxon>Muridae</taxon>
        <taxon>Murinae</taxon>
        <taxon>Mus</taxon>
        <taxon>Mus</taxon>
    </lineage>
</organism>
<proteinExistence type="evidence at protein level"/>
<comment type="function">
    <text evidence="1 4 6 7 8 9">Transports Zn(2+) from the endoplasmic reticulum (ER)/Golgi apparatus to the cytosol, playing an essential role in the regulation of cytosolic zinc levels (PubMed:15705588). Acts as a gatekeeper of zinc release from intracellular stores, requiring post-translational activation by phosphorylation, resulting in activation of multiple downstream pathways leading to cell growth and proliferation (By similarity). Has an essential role in B cell development and is required for proper B cell receptor signaling (PubMed:30718914). Plays an important role in maintaining intestinal epithelial homeostasis and skin dermis development by regulating ER function (PubMed:27736879, PubMed:28545780). Controls cell signaling pathways involved in glucose metabolism in skeletal muscle (PubMed:31266232). Has a protective role against ER stress in different biological contexts (PubMed:31266232). Mediates Zn(2+)-induced ferroptosis (By similarity).</text>
</comment>
<comment type="catalytic activity">
    <reaction evidence="4">
        <text>Zn(2+)(in) = Zn(2+)(out)</text>
        <dbReference type="Rhea" id="RHEA:29351"/>
        <dbReference type="ChEBI" id="CHEBI:29105"/>
    </reaction>
</comment>
<comment type="subunit">
    <text evidence="1">Homodimer.</text>
</comment>
<comment type="interaction">
    <interactant intactId="EBI-644519">
        <id>Q31125</id>
    </interactant>
    <interactant intactId="EBI-518014">
        <id>P25118</id>
        <label>Tnfrsf1a</label>
    </interactant>
    <organismsDiffer>false</organismsDiffer>
    <experiments>3</experiments>
</comment>
<comment type="subcellular location">
    <subcellularLocation>
        <location evidence="1">Endoplasmic reticulum membrane</location>
        <topology evidence="2">Multi-pass membrane protein</topology>
    </subcellularLocation>
    <subcellularLocation>
        <location evidence="1">Golgi apparatus</location>
        <location evidence="1">cis-Golgi network membrane</location>
        <topology evidence="2">Multi-pass membrane protein</topology>
    </subcellularLocation>
</comment>
<comment type="tissue specificity">
    <text evidence="4 5 6">Widely expressed (PubMed:15705588, PubMed:2294398). Highly expressed in the intestinal crypts (PubMed:27736879).</text>
</comment>
<comment type="induction">
    <text evidence="9">Down-regulated in an insulin-resistant, and high-fat diet state.</text>
</comment>
<comment type="PTM">
    <text evidence="10">Methylation at some His residue by METTL9 leads to reduced zinc-binding.</text>
</comment>
<comment type="PTM">
    <text evidence="1">Rapidly phosphorylated by CK2 following Zn(2+) treatment. This phosphorylation is required for efficient cytosolic Zn(2+) release.</text>
</comment>
<comment type="similarity">
    <text evidence="12">Belongs to the ZIP transporter (TC 2.A.5) family. KE4/Catsup subfamily.</text>
</comment>
<comment type="sequence caution" evidence="12">
    <conflict type="frameshift">
        <sequence resource="EMBL-CDS" id="AAA37767"/>
    </conflict>
</comment>
<accession>Q31125</accession>
<accession>Q3TVU6</accession>
<accession>Q9Z1W1</accession>
<gene>
    <name type="primary">Slc39a7</name>
    <name type="synonym">H2-Ke4</name>
    <name type="synonym">Hke4</name>
</gene>
<dbReference type="EMBL" id="M32010">
    <property type="protein sequence ID" value="AAA37767.1"/>
    <property type="status" value="ALT_FRAME"/>
    <property type="molecule type" value="mRNA"/>
</dbReference>
<dbReference type="EMBL" id="AF100956">
    <property type="protein sequence ID" value="AAC69903.1"/>
    <property type="molecule type" value="Genomic_DNA"/>
</dbReference>
<dbReference type="EMBL" id="AK159968">
    <property type="protein sequence ID" value="BAE35522.1"/>
    <property type="molecule type" value="mRNA"/>
</dbReference>
<dbReference type="CCDS" id="CCDS37576.1"/>
<dbReference type="PIR" id="I49714">
    <property type="entry name" value="I49714"/>
</dbReference>
<dbReference type="RefSeq" id="NP_001071177.1">
    <property type="nucleotide sequence ID" value="NM_001077709.1"/>
</dbReference>
<dbReference type="RefSeq" id="NP_032228.2">
    <property type="nucleotide sequence ID" value="NM_008202.2"/>
</dbReference>
<dbReference type="SMR" id="Q31125"/>
<dbReference type="BioGRID" id="200158">
    <property type="interactions" value="7"/>
</dbReference>
<dbReference type="FunCoup" id="Q31125">
    <property type="interactions" value="2052"/>
</dbReference>
<dbReference type="IntAct" id="Q31125">
    <property type="interactions" value="4"/>
</dbReference>
<dbReference type="MINT" id="Q31125"/>
<dbReference type="STRING" id="10090.ENSMUSP00000025186"/>
<dbReference type="iPTMnet" id="Q31125"/>
<dbReference type="PhosphoSitePlus" id="Q31125"/>
<dbReference type="SwissPalm" id="Q31125"/>
<dbReference type="jPOST" id="Q31125"/>
<dbReference type="PaxDb" id="10090-ENSMUSP00000025186"/>
<dbReference type="ProteomicsDB" id="260786"/>
<dbReference type="Pumba" id="Q31125"/>
<dbReference type="Antibodypedia" id="28954">
    <property type="antibodies" value="251 antibodies from 34 providers"/>
</dbReference>
<dbReference type="DNASU" id="14977"/>
<dbReference type="Ensembl" id="ENSMUST00000025186.16">
    <property type="protein sequence ID" value="ENSMUSP00000025186.9"/>
    <property type="gene ID" value="ENSMUSG00000024327.17"/>
</dbReference>
<dbReference type="Ensembl" id="ENSMUST00000169397.9">
    <property type="protein sequence ID" value="ENSMUSP00000130102.2"/>
    <property type="gene ID" value="ENSMUSG00000024327.17"/>
</dbReference>
<dbReference type="GeneID" id="14977"/>
<dbReference type="KEGG" id="mmu:14977"/>
<dbReference type="UCSC" id="uc008cav.1">
    <property type="organism name" value="mouse"/>
</dbReference>
<dbReference type="AGR" id="MGI:95909"/>
<dbReference type="CTD" id="7922"/>
<dbReference type="MGI" id="MGI:95909">
    <property type="gene designation" value="Slc39a7"/>
</dbReference>
<dbReference type="VEuPathDB" id="HostDB:ENSMUSG00000024327"/>
<dbReference type="eggNOG" id="KOG2693">
    <property type="taxonomic scope" value="Eukaryota"/>
</dbReference>
<dbReference type="GeneTree" id="ENSGT00940000160076"/>
<dbReference type="HOGENOM" id="CLU_015114_0_1_1"/>
<dbReference type="InParanoid" id="Q31125"/>
<dbReference type="OMA" id="IWLHSIG"/>
<dbReference type="OrthoDB" id="200954at2759"/>
<dbReference type="PhylomeDB" id="Q31125"/>
<dbReference type="TreeFam" id="TF318470"/>
<dbReference type="Reactome" id="R-MMU-442380">
    <property type="pathway name" value="Zinc influx into cells by the SLC39 gene family"/>
</dbReference>
<dbReference type="BioGRID-ORCS" id="14977">
    <property type="hits" value="12 hits in 76 CRISPR screens"/>
</dbReference>
<dbReference type="ChiTaRS" id="Slc39a7">
    <property type="organism name" value="mouse"/>
</dbReference>
<dbReference type="PRO" id="PR:Q31125"/>
<dbReference type="Proteomes" id="UP000000589">
    <property type="component" value="Chromosome 17"/>
</dbReference>
<dbReference type="RNAct" id="Q31125">
    <property type="molecule type" value="protein"/>
</dbReference>
<dbReference type="Bgee" id="ENSMUSG00000024327">
    <property type="expression patterns" value="Expressed in islet of Langerhans and 68 other cell types or tissues"/>
</dbReference>
<dbReference type="ExpressionAtlas" id="Q31125">
    <property type="expression patterns" value="baseline and differential"/>
</dbReference>
<dbReference type="GO" id="GO:0005789">
    <property type="term" value="C:endoplasmic reticulum membrane"/>
    <property type="evidence" value="ECO:0007669"/>
    <property type="project" value="UniProtKB-SubCell"/>
</dbReference>
<dbReference type="GO" id="GO:0005794">
    <property type="term" value="C:Golgi apparatus"/>
    <property type="evidence" value="ECO:0007669"/>
    <property type="project" value="UniProtKB-SubCell"/>
</dbReference>
<dbReference type="GO" id="GO:0005654">
    <property type="term" value="C:nucleoplasm"/>
    <property type="evidence" value="ECO:0007669"/>
    <property type="project" value="Ensembl"/>
</dbReference>
<dbReference type="GO" id="GO:0005385">
    <property type="term" value="F:zinc ion transmembrane transporter activity"/>
    <property type="evidence" value="ECO:0000314"/>
    <property type="project" value="UniProtKB"/>
</dbReference>
<dbReference type="GO" id="GO:0030183">
    <property type="term" value="P:B cell differentiation"/>
    <property type="evidence" value="ECO:0000315"/>
    <property type="project" value="UniProtKB"/>
</dbReference>
<dbReference type="GO" id="GO:0006882">
    <property type="term" value="P:intracellular zinc ion homeostasis"/>
    <property type="evidence" value="ECO:0000250"/>
    <property type="project" value="UniProtKB"/>
</dbReference>
<dbReference type="GO" id="GO:0110075">
    <property type="term" value="P:regulation of ferroptosis"/>
    <property type="evidence" value="ECO:0000250"/>
    <property type="project" value="UniProtKB"/>
</dbReference>
<dbReference type="GO" id="GO:0098773">
    <property type="term" value="P:skin epidermis development"/>
    <property type="evidence" value="ECO:0000315"/>
    <property type="project" value="UniProtKB"/>
</dbReference>
<dbReference type="GO" id="GO:0071577">
    <property type="term" value="P:zinc ion transmembrane transport"/>
    <property type="evidence" value="ECO:0000314"/>
    <property type="project" value="UniProtKB"/>
</dbReference>
<dbReference type="InterPro" id="IPR003689">
    <property type="entry name" value="ZIP"/>
</dbReference>
<dbReference type="PANTHER" id="PTHR16950:SF25">
    <property type="entry name" value="ZINC TRANSPORTER SLC39A7"/>
    <property type="match status" value="1"/>
</dbReference>
<dbReference type="PANTHER" id="PTHR16950">
    <property type="entry name" value="ZINC TRANSPORTER SLC39A7 HISTIDINE-RICH MEMBRANE PROTEIN KE4"/>
    <property type="match status" value="1"/>
</dbReference>
<dbReference type="Pfam" id="PF02535">
    <property type="entry name" value="Zip"/>
    <property type="match status" value="1"/>
</dbReference>